<sequence>MRWPPWASESQARDKQDEQNQKNWDKSLNAIDWAAFTEPRTLIPTLILTTGIIGALQIHRRYLRRFPDAVSISPSYFRKRTILGQVTSVGDGDGFRLYHTPGGRLAGWGWLPWKRVPTAKKDLRDKTISVRLAGVDAPELAHFGRPEQPYAREAHEWLTSYVLNRRVRVLVHRQDQYQRVVASAYVRRAIDFPIPFRRRDVSYEMLTRGLATVYEAKAGSEFGGPELERKYREAESIAKRKGTGLWKGYRRNRKGWESPREYKTRMGLEEQSQGKGN</sequence>
<name>LCL3_ASPOR</name>
<comment type="subcellular location">
    <subcellularLocation>
        <location>Mitochondrion</location>
    </subcellularLocation>
    <subcellularLocation>
        <location evidence="1">Membrane</location>
        <topology evidence="1">Single-pass membrane protein</topology>
    </subcellularLocation>
</comment>
<comment type="similarity">
    <text evidence="5">Belongs to the LCL3 family.</text>
</comment>
<dbReference type="EC" id="3.1.-.-"/>
<dbReference type="EMBL" id="BA000049">
    <property type="protein sequence ID" value="BAE55783.1"/>
    <property type="molecule type" value="Genomic_DNA"/>
</dbReference>
<dbReference type="RefSeq" id="XP_001817785.1">
    <property type="nucleotide sequence ID" value="XM_001817733.2"/>
</dbReference>
<dbReference type="SMR" id="Q2URN2"/>
<dbReference type="EnsemblFungi" id="BAE55783">
    <property type="protein sequence ID" value="BAE55783"/>
    <property type="gene ID" value="AO090005000757"/>
</dbReference>
<dbReference type="GeneID" id="5989730"/>
<dbReference type="KEGG" id="aor:AO090005000757"/>
<dbReference type="VEuPathDB" id="FungiDB:AO090005000757"/>
<dbReference type="HOGENOM" id="CLU_046484_0_1_1"/>
<dbReference type="OMA" id="IYHTPGG"/>
<dbReference type="OrthoDB" id="64827at5052"/>
<dbReference type="Proteomes" id="UP000006564">
    <property type="component" value="Chromosome 1"/>
</dbReference>
<dbReference type="GO" id="GO:0016020">
    <property type="term" value="C:membrane"/>
    <property type="evidence" value="ECO:0007669"/>
    <property type="project" value="UniProtKB-SubCell"/>
</dbReference>
<dbReference type="GO" id="GO:0005739">
    <property type="term" value="C:mitochondrion"/>
    <property type="evidence" value="ECO:0007669"/>
    <property type="project" value="UniProtKB-SubCell"/>
</dbReference>
<dbReference type="GO" id="GO:0004519">
    <property type="term" value="F:endonuclease activity"/>
    <property type="evidence" value="ECO:0007669"/>
    <property type="project" value="UniProtKB-KW"/>
</dbReference>
<dbReference type="GO" id="GO:0046872">
    <property type="term" value="F:metal ion binding"/>
    <property type="evidence" value="ECO:0007669"/>
    <property type="project" value="UniProtKB-KW"/>
</dbReference>
<dbReference type="FunFam" id="2.40.50.90:FF:000029">
    <property type="entry name" value="Probable endonuclease lcl3"/>
    <property type="match status" value="1"/>
</dbReference>
<dbReference type="Gene3D" id="2.40.50.90">
    <property type="match status" value="1"/>
</dbReference>
<dbReference type="InterPro" id="IPR035437">
    <property type="entry name" value="SNase_OB-fold_sf"/>
</dbReference>
<dbReference type="InterPro" id="IPR016071">
    <property type="entry name" value="Staphylococal_nuclease_OB-fold"/>
</dbReference>
<dbReference type="PANTHER" id="PTHR12302">
    <property type="entry name" value="EBNA2 BINDING PROTEIN P100"/>
    <property type="match status" value="1"/>
</dbReference>
<dbReference type="PANTHER" id="PTHR12302:SF3">
    <property type="entry name" value="SERINE_THREONINE-PROTEIN KINASE 31"/>
    <property type="match status" value="1"/>
</dbReference>
<dbReference type="Pfam" id="PF00565">
    <property type="entry name" value="SNase"/>
    <property type="match status" value="1"/>
</dbReference>
<dbReference type="SMART" id="SM00318">
    <property type="entry name" value="SNc"/>
    <property type="match status" value="1"/>
</dbReference>
<dbReference type="SUPFAM" id="SSF50199">
    <property type="entry name" value="Staphylococcal nuclease"/>
    <property type="match status" value="1"/>
</dbReference>
<dbReference type="PROSITE" id="PS50830">
    <property type="entry name" value="TNASE_3"/>
    <property type="match status" value="1"/>
</dbReference>
<evidence type="ECO:0000250" key="1"/>
<evidence type="ECO:0000255" key="2"/>
<evidence type="ECO:0000255" key="3">
    <source>
        <dbReference type="PROSITE-ProRule" id="PRU00272"/>
    </source>
</evidence>
<evidence type="ECO:0000256" key="4">
    <source>
        <dbReference type="SAM" id="MobiDB-lite"/>
    </source>
</evidence>
<evidence type="ECO:0000305" key="5"/>
<protein>
    <recommendedName>
        <fullName>Probable endonuclease lcl3</fullName>
        <ecNumber>3.1.-.-</ecNumber>
    </recommendedName>
</protein>
<accession>Q2URN2</accession>
<keyword id="KW-0106">Calcium</keyword>
<keyword id="KW-0255">Endonuclease</keyword>
<keyword id="KW-0378">Hydrolase</keyword>
<keyword id="KW-0472">Membrane</keyword>
<keyword id="KW-0479">Metal-binding</keyword>
<keyword id="KW-0496">Mitochondrion</keyword>
<keyword id="KW-0540">Nuclease</keyword>
<keyword id="KW-1185">Reference proteome</keyword>
<keyword id="KW-0812">Transmembrane</keyword>
<keyword id="KW-1133">Transmembrane helix</keyword>
<gene>
    <name type="primary">lcl3</name>
    <name type="ORF">AO090005000757</name>
</gene>
<organism>
    <name type="scientific">Aspergillus oryzae (strain ATCC 42149 / RIB 40)</name>
    <name type="common">Yellow koji mold</name>
    <dbReference type="NCBI Taxonomy" id="510516"/>
    <lineage>
        <taxon>Eukaryota</taxon>
        <taxon>Fungi</taxon>
        <taxon>Dikarya</taxon>
        <taxon>Ascomycota</taxon>
        <taxon>Pezizomycotina</taxon>
        <taxon>Eurotiomycetes</taxon>
        <taxon>Eurotiomycetidae</taxon>
        <taxon>Eurotiales</taxon>
        <taxon>Aspergillaceae</taxon>
        <taxon>Aspergillus</taxon>
        <taxon>Aspergillus subgen. Circumdati</taxon>
    </lineage>
</organism>
<proteinExistence type="inferred from homology"/>
<reference key="1">
    <citation type="journal article" date="2005" name="Nature">
        <title>Genome sequencing and analysis of Aspergillus oryzae.</title>
        <authorList>
            <person name="Machida M."/>
            <person name="Asai K."/>
            <person name="Sano M."/>
            <person name="Tanaka T."/>
            <person name="Kumagai T."/>
            <person name="Terai G."/>
            <person name="Kusumoto K."/>
            <person name="Arima T."/>
            <person name="Akita O."/>
            <person name="Kashiwagi Y."/>
            <person name="Abe K."/>
            <person name="Gomi K."/>
            <person name="Horiuchi H."/>
            <person name="Kitamoto K."/>
            <person name="Kobayashi T."/>
            <person name="Takeuchi M."/>
            <person name="Denning D.W."/>
            <person name="Galagan J.E."/>
            <person name="Nierman W.C."/>
            <person name="Yu J."/>
            <person name="Archer D.B."/>
            <person name="Bennett J.W."/>
            <person name="Bhatnagar D."/>
            <person name="Cleveland T.E."/>
            <person name="Fedorova N.D."/>
            <person name="Gotoh O."/>
            <person name="Horikawa H."/>
            <person name="Hosoyama A."/>
            <person name="Ichinomiya M."/>
            <person name="Igarashi R."/>
            <person name="Iwashita K."/>
            <person name="Juvvadi P.R."/>
            <person name="Kato M."/>
            <person name="Kato Y."/>
            <person name="Kin T."/>
            <person name="Kokubun A."/>
            <person name="Maeda H."/>
            <person name="Maeyama N."/>
            <person name="Maruyama J."/>
            <person name="Nagasaki H."/>
            <person name="Nakajima T."/>
            <person name="Oda K."/>
            <person name="Okada K."/>
            <person name="Paulsen I."/>
            <person name="Sakamoto K."/>
            <person name="Sawano T."/>
            <person name="Takahashi M."/>
            <person name="Takase K."/>
            <person name="Terabayashi Y."/>
            <person name="Wortman J.R."/>
            <person name="Yamada O."/>
            <person name="Yamagata Y."/>
            <person name="Anazawa H."/>
            <person name="Hata Y."/>
            <person name="Koide Y."/>
            <person name="Komori T."/>
            <person name="Koyama Y."/>
            <person name="Minetoki T."/>
            <person name="Suharnan S."/>
            <person name="Tanaka A."/>
            <person name="Isono K."/>
            <person name="Kuhara S."/>
            <person name="Ogasawara N."/>
            <person name="Kikuchi H."/>
        </authorList>
    </citation>
    <scope>NUCLEOTIDE SEQUENCE [LARGE SCALE GENOMIC DNA]</scope>
    <source>
        <strain>ATCC 42149 / RIB 40</strain>
    </source>
</reference>
<feature type="chain" id="PRO_0000408647" description="Probable endonuclease lcl3">
    <location>
        <begin position="1"/>
        <end position="277"/>
    </location>
</feature>
<feature type="transmembrane region" description="Helical" evidence="2">
    <location>
        <begin position="42"/>
        <end position="58"/>
    </location>
</feature>
<feature type="domain" description="TNase-like" evidence="3">
    <location>
        <begin position="80"/>
        <end position="248"/>
    </location>
</feature>
<feature type="region of interest" description="Disordered" evidence="4">
    <location>
        <begin position="1"/>
        <end position="22"/>
    </location>
</feature>
<feature type="region of interest" description="Disordered" evidence="4">
    <location>
        <begin position="257"/>
        <end position="277"/>
    </location>
</feature>
<feature type="compositionally biased region" description="Basic and acidic residues" evidence="4">
    <location>
        <begin position="11"/>
        <end position="22"/>
    </location>
</feature>
<feature type="compositionally biased region" description="Basic and acidic residues" evidence="4">
    <location>
        <begin position="257"/>
        <end position="268"/>
    </location>
</feature>
<feature type="active site" evidence="3">
    <location>
        <position position="131"/>
    </location>
</feature>
<feature type="active site" evidence="3">
    <location>
        <position position="139"/>
    </location>
</feature>
<feature type="active site" evidence="3">
    <location>
        <position position="179"/>
    </location>
</feature>
<feature type="binding site" evidence="3">
    <location>
        <position position="136"/>
    </location>
    <ligand>
        <name>Ca(2+)</name>
        <dbReference type="ChEBI" id="CHEBI:29108"/>
    </ligand>
</feature>